<organism>
    <name type="scientific">Chlorobaculum tepidum (strain ATCC 49652 / DSM 12025 / NBRC 103806 / TLS)</name>
    <name type="common">Chlorobium tepidum</name>
    <dbReference type="NCBI Taxonomy" id="194439"/>
    <lineage>
        <taxon>Bacteria</taxon>
        <taxon>Pseudomonadati</taxon>
        <taxon>Chlorobiota</taxon>
        <taxon>Chlorobiia</taxon>
        <taxon>Chlorobiales</taxon>
        <taxon>Chlorobiaceae</taxon>
        <taxon>Chlorobaculum</taxon>
    </lineage>
</organism>
<feature type="chain" id="PRO_0000258817" description="UPF0301 protein CT0663">
    <location>
        <begin position="1"/>
        <end position="187"/>
    </location>
</feature>
<accession>Q8KEM4</accession>
<evidence type="ECO:0000255" key="1">
    <source>
        <dbReference type="HAMAP-Rule" id="MF_00758"/>
    </source>
</evidence>
<name>Y663_CHLTE</name>
<comment type="similarity">
    <text evidence="1">Belongs to the UPF0301 (AlgH) family.</text>
</comment>
<protein>
    <recommendedName>
        <fullName evidence="1">UPF0301 protein CT0663</fullName>
    </recommendedName>
</protein>
<gene>
    <name type="ordered locus">CT0663</name>
</gene>
<proteinExistence type="inferred from homology"/>
<reference key="1">
    <citation type="journal article" date="2002" name="Proc. Natl. Acad. Sci. U.S.A.">
        <title>The complete genome sequence of Chlorobium tepidum TLS, a photosynthetic, anaerobic, green-sulfur bacterium.</title>
        <authorList>
            <person name="Eisen J.A."/>
            <person name="Nelson K.E."/>
            <person name="Paulsen I.T."/>
            <person name="Heidelberg J.F."/>
            <person name="Wu M."/>
            <person name="Dodson R.J."/>
            <person name="DeBoy R.T."/>
            <person name="Gwinn M.L."/>
            <person name="Nelson W.C."/>
            <person name="Haft D.H."/>
            <person name="Hickey E.K."/>
            <person name="Peterson J.D."/>
            <person name="Durkin A.S."/>
            <person name="Kolonay J.F."/>
            <person name="Yang F."/>
            <person name="Holt I.E."/>
            <person name="Umayam L.A."/>
            <person name="Mason T.M."/>
            <person name="Brenner M."/>
            <person name="Shea T.P."/>
            <person name="Parksey D.S."/>
            <person name="Nierman W.C."/>
            <person name="Feldblyum T.V."/>
            <person name="Hansen C.L."/>
            <person name="Craven M.B."/>
            <person name="Radune D."/>
            <person name="Vamathevan J.J."/>
            <person name="Khouri H.M."/>
            <person name="White O."/>
            <person name="Gruber T.M."/>
            <person name="Ketchum K.A."/>
            <person name="Venter J.C."/>
            <person name="Tettelin H."/>
            <person name="Bryant D.A."/>
            <person name="Fraser C.M."/>
        </authorList>
    </citation>
    <scope>NUCLEOTIDE SEQUENCE [LARGE SCALE GENOMIC DNA]</scope>
    <source>
        <strain>ATCC 49652 / DSM 12025 / NBRC 103806 / TLS</strain>
    </source>
</reference>
<keyword id="KW-1185">Reference proteome</keyword>
<sequence length="187" mass="20806">MTNEFEILKPGKLLLASANLLDPNFKRTVLLMCEHNEEGSIGFILNKPMEFKVCEAISGFDEIDEPLHMGGPVQVDTVHVLHTRGDVIDGAVEVIPGLFWGGDKEQLSYLINTGVIKASEVRFFLGYAGWSAGQLEAEFEEGSWYTADASSEQVFTDEYERMWSRSVRSKGGEYCYVANSPELPGMN</sequence>
<dbReference type="EMBL" id="AE006470">
    <property type="protein sequence ID" value="AAM71902.1"/>
    <property type="molecule type" value="Genomic_DNA"/>
</dbReference>
<dbReference type="RefSeq" id="NP_661560.1">
    <property type="nucleotide sequence ID" value="NC_002932.3"/>
</dbReference>
<dbReference type="RefSeq" id="WP_010932347.1">
    <property type="nucleotide sequence ID" value="NC_002932.3"/>
</dbReference>
<dbReference type="SMR" id="Q8KEM4"/>
<dbReference type="STRING" id="194439.CT0663"/>
<dbReference type="EnsemblBacteria" id="AAM71902">
    <property type="protein sequence ID" value="AAM71902"/>
    <property type="gene ID" value="CT0663"/>
</dbReference>
<dbReference type="KEGG" id="cte:CT0663"/>
<dbReference type="PATRIC" id="fig|194439.7.peg.617"/>
<dbReference type="eggNOG" id="COG1678">
    <property type="taxonomic scope" value="Bacteria"/>
</dbReference>
<dbReference type="HOGENOM" id="CLU_057596_2_1_10"/>
<dbReference type="OrthoDB" id="9807486at2"/>
<dbReference type="Proteomes" id="UP000001007">
    <property type="component" value="Chromosome"/>
</dbReference>
<dbReference type="GO" id="GO:0005829">
    <property type="term" value="C:cytosol"/>
    <property type="evidence" value="ECO:0007669"/>
    <property type="project" value="TreeGrafter"/>
</dbReference>
<dbReference type="Gene3D" id="3.40.1740.10">
    <property type="entry name" value="VC0467-like"/>
    <property type="match status" value="1"/>
</dbReference>
<dbReference type="HAMAP" id="MF_00758">
    <property type="entry name" value="UPF0301"/>
    <property type="match status" value="1"/>
</dbReference>
<dbReference type="InterPro" id="IPR003774">
    <property type="entry name" value="AlgH-like"/>
</dbReference>
<dbReference type="PANTHER" id="PTHR30327">
    <property type="entry name" value="UNCHARACTERIZED PROTEIN YQGE"/>
    <property type="match status" value="1"/>
</dbReference>
<dbReference type="PANTHER" id="PTHR30327:SF1">
    <property type="entry name" value="UPF0301 PROTEIN YQGE"/>
    <property type="match status" value="1"/>
</dbReference>
<dbReference type="Pfam" id="PF02622">
    <property type="entry name" value="DUF179"/>
    <property type="match status" value="1"/>
</dbReference>
<dbReference type="SUPFAM" id="SSF143456">
    <property type="entry name" value="VC0467-like"/>
    <property type="match status" value="1"/>
</dbReference>